<dbReference type="EC" id="3.1.26.4" evidence="1"/>
<dbReference type="EMBL" id="CP000820">
    <property type="protein sequence ID" value="ABW10608.1"/>
    <property type="molecule type" value="Genomic_DNA"/>
</dbReference>
<dbReference type="RefSeq" id="WP_020458785.1">
    <property type="nucleotide sequence ID" value="NC_009921.1"/>
</dbReference>
<dbReference type="SMR" id="A8L6C6"/>
<dbReference type="STRING" id="298653.Franean1_1154"/>
<dbReference type="KEGG" id="fre:Franean1_1154"/>
<dbReference type="eggNOG" id="COG0164">
    <property type="taxonomic scope" value="Bacteria"/>
</dbReference>
<dbReference type="HOGENOM" id="CLU_036532_1_0_11"/>
<dbReference type="GO" id="GO:0005737">
    <property type="term" value="C:cytoplasm"/>
    <property type="evidence" value="ECO:0007669"/>
    <property type="project" value="UniProtKB-SubCell"/>
</dbReference>
<dbReference type="GO" id="GO:0032299">
    <property type="term" value="C:ribonuclease H2 complex"/>
    <property type="evidence" value="ECO:0007669"/>
    <property type="project" value="TreeGrafter"/>
</dbReference>
<dbReference type="GO" id="GO:0030145">
    <property type="term" value="F:manganese ion binding"/>
    <property type="evidence" value="ECO:0007669"/>
    <property type="project" value="UniProtKB-UniRule"/>
</dbReference>
<dbReference type="GO" id="GO:0003723">
    <property type="term" value="F:RNA binding"/>
    <property type="evidence" value="ECO:0007669"/>
    <property type="project" value="InterPro"/>
</dbReference>
<dbReference type="GO" id="GO:0004523">
    <property type="term" value="F:RNA-DNA hybrid ribonuclease activity"/>
    <property type="evidence" value="ECO:0007669"/>
    <property type="project" value="UniProtKB-UniRule"/>
</dbReference>
<dbReference type="GO" id="GO:0043137">
    <property type="term" value="P:DNA replication, removal of RNA primer"/>
    <property type="evidence" value="ECO:0007669"/>
    <property type="project" value="TreeGrafter"/>
</dbReference>
<dbReference type="GO" id="GO:0006298">
    <property type="term" value="P:mismatch repair"/>
    <property type="evidence" value="ECO:0007669"/>
    <property type="project" value="TreeGrafter"/>
</dbReference>
<dbReference type="CDD" id="cd07182">
    <property type="entry name" value="RNase_HII_bacteria_HII_like"/>
    <property type="match status" value="1"/>
</dbReference>
<dbReference type="Gene3D" id="3.30.420.10">
    <property type="entry name" value="Ribonuclease H-like superfamily/Ribonuclease H"/>
    <property type="match status" value="1"/>
</dbReference>
<dbReference type="HAMAP" id="MF_00052_B">
    <property type="entry name" value="RNase_HII_B"/>
    <property type="match status" value="1"/>
</dbReference>
<dbReference type="InterPro" id="IPR022898">
    <property type="entry name" value="RNase_HII"/>
</dbReference>
<dbReference type="InterPro" id="IPR001352">
    <property type="entry name" value="RNase_HII/HIII"/>
</dbReference>
<dbReference type="InterPro" id="IPR024567">
    <property type="entry name" value="RNase_HII/HIII_dom"/>
</dbReference>
<dbReference type="InterPro" id="IPR012337">
    <property type="entry name" value="RNaseH-like_sf"/>
</dbReference>
<dbReference type="InterPro" id="IPR036397">
    <property type="entry name" value="RNaseH_sf"/>
</dbReference>
<dbReference type="NCBIfam" id="NF000595">
    <property type="entry name" value="PRK00015.1-3"/>
    <property type="match status" value="1"/>
</dbReference>
<dbReference type="NCBIfam" id="NF000598">
    <property type="entry name" value="PRK00015.2-2"/>
    <property type="match status" value="1"/>
</dbReference>
<dbReference type="PANTHER" id="PTHR10954">
    <property type="entry name" value="RIBONUCLEASE H2 SUBUNIT A"/>
    <property type="match status" value="1"/>
</dbReference>
<dbReference type="PANTHER" id="PTHR10954:SF18">
    <property type="entry name" value="RIBONUCLEASE HII"/>
    <property type="match status" value="1"/>
</dbReference>
<dbReference type="Pfam" id="PF01351">
    <property type="entry name" value="RNase_HII"/>
    <property type="match status" value="1"/>
</dbReference>
<dbReference type="SUPFAM" id="SSF53098">
    <property type="entry name" value="Ribonuclease H-like"/>
    <property type="match status" value="1"/>
</dbReference>
<dbReference type="PROSITE" id="PS51975">
    <property type="entry name" value="RNASE_H_2"/>
    <property type="match status" value="1"/>
</dbReference>
<accession>A8L6C6</accession>
<reference key="1">
    <citation type="journal article" date="2007" name="Genome Res.">
        <title>Genome characteristics of facultatively symbiotic Frankia sp. strains reflect host range and host plant biogeography.</title>
        <authorList>
            <person name="Normand P."/>
            <person name="Lapierre P."/>
            <person name="Tisa L.S."/>
            <person name="Gogarten J.P."/>
            <person name="Alloisio N."/>
            <person name="Bagnarol E."/>
            <person name="Bassi C.A."/>
            <person name="Berry A.M."/>
            <person name="Bickhart D.M."/>
            <person name="Choisne N."/>
            <person name="Couloux A."/>
            <person name="Cournoyer B."/>
            <person name="Cruveiller S."/>
            <person name="Daubin V."/>
            <person name="Demange N."/>
            <person name="Francino M.P."/>
            <person name="Goltsman E."/>
            <person name="Huang Y."/>
            <person name="Kopp O.R."/>
            <person name="Labarre L."/>
            <person name="Lapidus A."/>
            <person name="Lavire C."/>
            <person name="Marechal J."/>
            <person name="Martinez M."/>
            <person name="Mastronunzio J.E."/>
            <person name="Mullin B.C."/>
            <person name="Niemann J."/>
            <person name="Pujic P."/>
            <person name="Rawnsley T."/>
            <person name="Rouy Z."/>
            <person name="Schenowitz C."/>
            <person name="Sellstedt A."/>
            <person name="Tavares F."/>
            <person name="Tomkins J.P."/>
            <person name="Vallenet D."/>
            <person name="Valverde C."/>
            <person name="Wall L.G."/>
            <person name="Wang Y."/>
            <person name="Medigue C."/>
            <person name="Benson D.R."/>
        </authorList>
    </citation>
    <scope>NUCLEOTIDE SEQUENCE [LARGE SCALE GENOMIC DNA]</scope>
    <source>
        <strain>EAN1pec</strain>
    </source>
</reference>
<sequence length="240" mass="25572">MDVRGTAIRSDAGLFGYERALVRRGLGPVAGVDEAGRGACAGPMVVAAVVLDQRRLGLLRRLADSKLLTERVREEVHADVLAAAAAVSTIVIPAAEIDRNGVHVANIMGMRRAVAVLDVRPRYVLTDGFAVAGLGAESLAVIKGDLMVGCIAAASVVAKVTRDRIMRSLHKRYPEYDFAQHKGYVTAAHTAAMTRYGPCEQHRLSYVNVAALAAPAGETRSLRLEDRVAMTSLRGVTETA</sequence>
<feature type="chain" id="PRO_1000091624" description="Ribonuclease HII">
    <location>
        <begin position="1"/>
        <end position="240"/>
    </location>
</feature>
<feature type="domain" description="RNase H type-2" evidence="2">
    <location>
        <begin position="27"/>
        <end position="226"/>
    </location>
</feature>
<feature type="binding site" evidence="1">
    <location>
        <position position="33"/>
    </location>
    <ligand>
        <name>a divalent metal cation</name>
        <dbReference type="ChEBI" id="CHEBI:60240"/>
    </ligand>
</feature>
<feature type="binding site" evidence="1">
    <location>
        <position position="34"/>
    </location>
    <ligand>
        <name>a divalent metal cation</name>
        <dbReference type="ChEBI" id="CHEBI:60240"/>
    </ligand>
</feature>
<feature type="binding site" evidence="1">
    <location>
        <position position="127"/>
    </location>
    <ligand>
        <name>a divalent metal cation</name>
        <dbReference type="ChEBI" id="CHEBI:60240"/>
    </ligand>
</feature>
<proteinExistence type="inferred from homology"/>
<evidence type="ECO:0000255" key="1">
    <source>
        <dbReference type="HAMAP-Rule" id="MF_00052"/>
    </source>
</evidence>
<evidence type="ECO:0000255" key="2">
    <source>
        <dbReference type="PROSITE-ProRule" id="PRU01319"/>
    </source>
</evidence>
<keyword id="KW-0963">Cytoplasm</keyword>
<keyword id="KW-0255">Endonuclease</keyword>
<keyword id="KW-0378">Hydrolase</keyword>
<keyword id="KW-0464">Manganese</keyword>
<keyword id="KW-0479">Metal-binding</keyword>
<keyword id="KW-0540">Nuclease</keyword>
<gene>
    <name evidence="1" type="primary">rnhB</name>
    <name type="ordered locus">Franean1_1154</name>
</gene>
<protein>
    <recommendedName>
        <fullName evidence="1">Ribonuclease HII</fullName>
        <shortName evidence="1">RNase HII</shortName>
        <ecNumber evidence="1">3.1.26.4</ecNumber>
    </recommendedName>
</protein>
<comment type="function">
    <text evidence="1">Endonuclease that specifically degrades the RNA of RNA-DNA hybrids.</text>
</comment>
<comment type="catalytic activity">
    <reaction evidence="1">
        <text>Endonucleolytic cleavage to 5'-phosphomonoester.</text>
        <dbReference type="EC" id="3.1.26.4"/>
    </reaction>
</comment>
<comment type="cofactor">
    <cofactor evidence="1">
        <name>Mn(2+)</name>
        <dbReference type="ChEBI" id="CHEBI:29035"/>
    </cofactor>
    <cofactor evidence="1">
        <name>Mg(2+)</name>
        <dbReference type="ChEBI" id="CHEBI:18420"/>
    </cofactor>
    <text evidence="1">Manganese or magnesium. Binds 1 divalent metal ion per monomer in the absence of substrate. May bind a second metal ion after substrate binding.</text>
</comment>
<comment type="subcellular location">
    <subcellularLocation>
        <location evidence="1">Cytoplasm</location>
    </subcellularLocation>
</comment>
<comment type="similarity">
    <text evidence="1">Belongs to the RNase HII family.</text>
</comment>
<organism>
    <name type="scientific">Parafrankia sp. (strain EAN1pec)</name>
    <dbReference type="NCBI Taxonomy" id="298653"/>
    <lineage>
        <taxon>Bacteria</taxon>
        <taxon>Bacillati</taxon>
        <taxon>Actinomycetota</taxon>
        <taxon>Actinomycetes</taxon>
        <taxon>Frankiales</taxon>
        <taxon>Frankiaceae</taxon>
        <taxon>Parafrankia</taxon>
    </lineage>
</organism>
<name>RNH2_PARS2</name>